<proteinExistence type="inferred from homology"/>
<dbReference type="EC" id="3.6.1.9" evidence="1"/>
<dbReference type="EMBL" id="MG641885">
    <property type="protein sequence ID" value="AUZ95523.1"/>
    <property type="molecule type" value="Genomic_DNA"/>
</dbReference>
<dbReference type="SMR" id="A0A2L0V161"/>
<dbReference type="Proteomes" id="UP000241443">
    <property type="component" value="Genome"/>
</dbReference>
<dbReference type="GO" id="GO:0016787">
    <property type="term" value="F:hydrolase activity"/>
    <property type="evidence" value="ECO:0007669"/>
    <property type="project" value="UniProtKB-KW"/>
</dbReference>
<dbReference type="GO" id="GO:0000166">
    <property type="term" value="F:nucleotide binding"/>
    <property type="evidence" value="ECO:0007669"/>
    <property type="project" value="UniProtKB-KW"/>
</dbReference>
<dbReference type="GO" id="GO:0008270">
    <property type="term" value="F:zinc ion binding"/>
    <property type="evidence" value="ECO:0007669"/>
    <property type="project" value="UniProtKB-KW"/>
</dbReference>
<dbReference type="Gene3D" id="1.10.287.1080">
    <property type="entry name" value="MazG-like"/>
    <property type="match status" value="1"/>
</dbReference>
<dbReference type="InterPro" id="IPR044038">
    <property type="entry name" value="dATP/dGTP_diPOhydrolase_N"/>
</dbReference>
<dbReference type="InterPro" id="IPR007538">
    <property type="entry name" value="dATP/dGTP_dipphydrolase_MazZ"/>
</dbReference>
<dbReference type="InterPro" id="IPR013087">
    <property type="entry name" value="Znf_C2H2_type"/>
</dbReference>
<dbReference type="Pfam" id="PF04447">
    <property type="entry name" value="dATP-dGTP_PPHyd"/>
    <property type="match status" value="1"/>
</dbReference>
<dbReference type="Pfam" id="PF18909">
    <property type="entry name" value="dGTP_diPhyd_N"/>
    <property type="match status" value="1"/>
</dbReference>
<dbReference type="SUPFAM" id="SSF101386">
    <property type="entry name" value="all-alpha NTP pyrophosphatases"/>
    <property type="match status" value="1"/>
</dbReference>
<dbReference type="PROSITE" id="PS00028">
    <property type="entry name" value="ZINC_FINGER_C2H2_1"/>
    <property type="match status" value="1"/>
</dbReference>
<dbReference type="PROSITE" id="PS50157">
    <property type="entry name" value="ZINC_FINGER_C2H2_2"/>
    <property type="match status" value="1"/>
</dbReference>
<keyword id="KW-0170">Cobalt</keyword>
<keyword id="KW-0378">Hydrolase</keyword>
<keyword id="KW-0479">Metal-binding</keyword>
<keyword id="KW-0547">Nucleotide-binding</keyword>
<keyword id="KW-1185">Reference proteome</keyword>
<keyword id="KW-0862">Zinc</keyword>
<keyword id="KW-0863">Zinc-finger</keyword>
<name>DGTPH_BPPMB</name>
<protein>
    <recommendedName>
        <fullName evidence="4">dATP/dGTP diphosphohydrolase</fullName>
        <ecNumber evidence="1">3.6.1.9</ecNumber>
    </recommendedName>
    <alternativeName>
        <fullName evidence="1">dATP/dGTP pyrophosphohydrolase</fullName>
    </alternativeName>
</protein>
<reference key="1">
    <citation type="journal article" date="2018" name="Genome Announc.">
        <title>Complete Genome Sequence of the Novel Virulent Phage PMBT28 with Lytic Activity against Thermotolerant Salmonella enterica subsp. enterica Serovar Senftenberg ATCC 43845.</title>
        <authorList>
            <person name="Koberg S."/>
            <person name="Brinks E."/>
            <person name="Albrecht V."/>
            <person name="Neve H."/>
            <person name="Franz C.M.A.P."/>
        </authorList>
    </citation>
    <scope>NUCLEOTIDE SEQUENCE [LARGE SCALE GENOMIC DNA]</scope>
</reference>
<feature type="chain" id="PRO_0000453685" description="dATP/dGTP diphosphohydrolase">
    <location>
        <begin position="1"/>
        <end position="290"/>
    </location>
</feature>
<feature type="zinc finger region" description="C2H2-type" evidence="2">
    <location>
        <begin position="262"/>
        <end position="285"/>
    </location>
</feature>
<feature type="region of interest" description="Disordered" evidence="3">
    <location>
        <begin position="103"/>
        <end position="141"/>
    </location>
</feature>
<accession>A0A2L0V161</accession>
<evidence type="ECO:0000250" key="1">
    <source>
        <dbReference type="UniProtKB" id="A0A2H5BHG5"/>
    </source>
</evidence>
<evidence type="ECO:0000255" key="2">
    <source>
        <dbReference type="PROSITE-ProRule" id="PRU00042"/>
    </source>
</evidence>
<evidence type="ECO:0000256" key="3">
    <source>
        <dbReference type="SAM" id="MobiDB-lite"/>
    </source>
</evidence>
<evidence type="ECO:0000305" key="4"/>
<comment type="function">
    <text evidence="1">Catalyzes the hydrolysis of dGTP into dGMP, which is needed among other for the first step of biosynthesis of dZTP (2-amino-2'-deoxyadenosine-5'-triphosphate).</text>
</comment>
<comment type="catalytic activity">
    <reaction evidence="1">
        <text>dGTP + H2O = dGMP + diphosphate + H(+)</text>
        <dbReference type="Rhea" id="RHEA:28362"/>
        <dbReference type="ChEBI" id="CHEBI:15377"/>
        <dbReference type="ChEBI" id="CHEBI:15378"/>
        <dbReference type="ChEBI" id="CHEBI:33019"/>
        <dbReference type="ChEBI" id="CHEBI:57673"/>
        <dbReference type="ChEBI" id="CHEBI:61429"/>
        <dbReference type="EC" id="3.6.1.9"/>
    </reaction>
</comment>
<comment type="catalytic activity">
    <reaction evidence="1">
        <text>dATP + H2O = dAMP + diphosphate + H(+)</text>
        <dbReference type="Rhea" id="RHEA:28334"/>
        <dbReference type="ChEBI" id="CHEBI:15377"/>
        <dbReference type="ChEBI" id="CHEBI:15378"/>
        <dbReference type="ChEBI" id="CHEBI:33019"/>
        <dbReference type="ChEBI" id="CHEBI:58245"/>
        <dbReference type="ChEBI" id="CHEBI:61404"/>
        <dbReference type="EC" id="3.6.1.9"/>
    </reaction>
</comment>
<comment type="cofactor">
    <cofactor evidence="1">
        <name>Co(2+)</name>
        <dbReference type="ChEBI" id="CHEBI:48828"/>
    </cofactor>
</comment>
<comment type="pathway">
    <text evidence="1">Purine metabolism.</text>
</comment>
<comment type="similarity">
    <text evidence="4">Belongs to the Caudovirales dATP/dGTP diphosphohydrolase family.</text>
</comment>
<sequence>MTGIKFDQGKAPLSLIDPRFTEEVARVLAIGEQKYGRANWQGLKIERLLDAVKRHVLELEKSNDHDDETGLHHAAHAASGLMFIFWLLNNRPTSDDRRWSAAVPGVREQRGSVQPVPDSEEGLDMQPVPAPSPSRSKKRAYSTGTIADVQKLISGWADRTFPDRTIGEAILKLKKELAELDTASYLDAGEFADVAILLLDIAQLAGIDIATAVANKMAINERRVWQRLEDGTHQHVIDGGRTDGVDPIIRVAMLPTDPTGSHLCVVCGQRFGSEDDRASHYTTTHGDRKP</sequence>
<organism>
    <name type="scientific">Salmonella phage PMBT28</name>
    <dbReference type="NCBI Taxonomy" id="2081904"/>
    <lineage>
        <taxon>Viruses</taxon>
        <taxon>Duplodnaviria</taxon>
        <taxon>Heunggongvirae</taxon>
        <taxon>Uroviricota</taxon>
        <taxon>Caudoviricetes</taxon>
    </lineage>
</organism>
<organismHost>
    <name type="scientific">Salmonella enterica</name>
    <name type="common">Salmonella choleraesuis</name>
    <dbReference type="NCBI Taxonomy" id="28901"/>
</organismHost>